<evidence type="ECO:0000250" key="1"/>
<evidence type="ECO:0000255" key="2">
    <source>
        <dbReference type="HAMAP-Rule" id="MF_01109"/>
    </source>
</evidence>
<gene>
    <name evidence="2" type="primary">argF</name>
    <name type="ordered locus">BT9727_3875</name>
</gene>
<reference key="1">
    <citation type="journal article" date="2006" name="J. Bacteriol.">
        <title>Pathogenomic sequence analysis of Bacillus cereus and Bacillus thuringiensis isolates closely related to Bacillus anthracis.</title>
        <authorList>
            <person name="Han C.S."/>
            <person name="Xie G."/>
            <person name="Challacombe J.F."/>
            <person name="Altherr M.R."/>
            <person name="Bhotika S.S."/>
            <person name="Bruce D."/>
            <person name="Campbell C.S."/>
            <person name="Campbell M.L."/>
            <person name="Chen J."/>
            <person name="Chertkov O."/>
            <person name="Cleland C."/>
            <person name="Dimitrijevic M."/>
            <person name="Doggett N.A."/>
            <person name="Fawcett J.J."/>
            <person name="Glavina T."/>
            <person name="Goodwin L.A."/>
            <person name="Hill K.K."/>
            <person name="Hitchcock P."/>
            <person name="Jackson P.J."/>
            <person name="Keim P."/>
            <person name="Kewalramani A.R."/>
            <person name="Longmire J."/>
            <person name="Lucas S."/>
            <person name="Malfatti S."/>
            <person name="McMurry K."/>
            <person name="Meincke L.J."/>
            <person name="Misra M."/>
            <person name="Moseman B.L."/>
            <person name="Mundt M."/>
            <person name="Munk A.C."/>
            <person name="Okinaka R.T."/>
            <person name="Parson-Quintana B."/>
            <person name="Reilly L.P."/>
            <person name="Richardson P."/>
            <person name="Robinson D.L."/>
            <person name="Rubin E."/>
            <person name="Saunders E."/>
            <person name="Tapia R."/>
            <person name="Tesmer J.G."/>
            <person name="Thayer N."/>
            <person name="Thompson L.S."/>
            <person name="Tice H."/>
            <person name="Ticknor L.O."/>
            <person name="Wills P.L."/>
            <person name="Brettin T.S."/>
            <person name="Gilna P."/>
        </authorList>
    </citation>
    <scope>NUCLEOTIDE SEQUENCE [LARGE SCALE GENOMIC DNA]</scope>
    <source>
        <strain>97-27</strain>
    </source>
</reference>
<feature type="chain" id="PRO_0000112882" description="Ornithine carbamoyltransferase">
    <location>
        <begin position="1"/>
        <end position="316"/>
    </location>
</feature>
<feature type="binding site" evidence="2">
    <location>
        <begin position="57"/>
        <end position="60"/>
    </location>
    <ligand>
        <name>carbamoyl phosphate</name>
        <dbReference type="ChEBI" id="CHEBI:58228"/>
    </ligand>
</feature>
<feature type="binding site" evidence="2">
    <location>
        <position position="84"/>
    </location>
    <ligand>
        <name>carbamoyl phosphate</name>
        <dbReference type="ChEBI" id="CHEBI:58228"/>
    </ligand>
</feature>
<feature type="binding site" evidence="2">
    <location>
        <position position="108"/>
    </location>
    <ligand>
        <name>carbamoyl phosphate</name>
        <dbReference type="ChEBI" id="CHEBI:58228"/>
    </ligand>
</feature>
<feature type="binding site" evidence="2">
    <location>
        <begin position="135"/>
        <end position="138"/>
    </location>
    <ligand>
        <name>carbamoyl phosphate</name>
        <dbReference type="ChEBI" id="CHEBI:58228"/>
    </ligand>
</feature>
<feature type="binding site" evidence="2">
    <location>
        <position position="166"/>
    </location>
    <ligand>
        <name>L-ornithine</name>
        <dbReference type="ChEBI" id="CHEBI:46911"/>
    </ligand>
</feature>
<feature type="binding site" evidence="2">
    <location>
        <position position="230"/>
    </location>
    <ligand>
        <name>L-ornithine</name>
        <dbReference type="ChEBI" id="CHEBI:46911"/>
    </ligand>
</feature>
<feature type="binding site" evidence="2">
    <location>
        <begin position="234"/>
        <end position="235"/>
    </location>
    <ligand>
        <name>L-ornithine</name>
        <dbReference type="ChEBI" id="CHEBI:46911"/>
    </ligand>
</feature>
<feature type="binding site" evidence="2">
    <location>
        <begin position="269"/>
        <end position="270"/>
    </location>
    <ligand>
        <name>carbamoyl phosphate</name>
        <dbReference type="ChEBI" id="CHEBI:58228"/>
    </ligand>
</feature>
<feature type="binding site" evidence="2">
    <location>
        <position position="297"/>
    </location>
    <ligand>
        <name>carbamoyl phosphate</name>
        <dbReference type="ChEBI" id="CHEBI:58228"/>
    </ligand>
</feature>
<keyword id="KW-0028">Amino-acid biosynthesis</keyword>
<keyword id="KW-0055">Arginine biosynthesis</keyword>
<keyword id="KW-0963">Cytoplasm</keyword>
<keyword id="KW-0808">Transferase</keyword>
<dbReference type="EC" id="2.1.3.3" evidence="2"/>
<dbReference type="EMBL" id="AE017355">
    <property type="protein sequence ID" value="AAT60752.1"/>
    <property type="molecule type" value="Genomic_DNA"/>
</dbReference>
<dbReference type="RefSeq" id="WP_000108844.1">
    <property type="nucleotide sequence ID" value="NC_005957.1"/>
</dbReference>
<dbReference type="RefSeq" id="YP_038194.1">
    <property type="nucleotide sequence ID" value="NC_005957.1"/>
</dbReference>
<dbReference type="SMR" id="Q6HE32"/>
<dbReference type="KEGG" id="btk:BT9727_3875"/>
<dbReference type="PATRIC" id="fig|281309.8.peg.4133"/>
<dbReference type="HOGENOM" id="CLU_043846_3_2_9"/>
<dbReference type="UniPathway" id="UPA00068">
    <property type="reaction ID" value="UER00112"/>
</dbReference>
<dbReference type="Proteomes" id="UP000001301">
    <property type="component" value="Chromosome"/>
</dbReference>
<dbReference type="GO" id="GO:0005737">
    <property type="term" value="C:cytoplasm"/>
    <property type="evidence" value="ECO:0007669"/>
    <property type="project" value="UniProtKB-SubCell"/>
</dbReference>
<dbReference type="GO" id="GO:0016597">
    <property type="term" value="F:amino acid binding"/>
    <property type="evidence" value="ECO:0007669"/>
    <property type="project" value="InterPro"/>
</dbReference>
<dbReference type="GO" id="GO:0004585">
    <property type="term" value="F:ornithine carbamoyltransferase activity"/>
    <property type="evidence" value="ECO:0007669"/>
    <property type="project" value="UniProtKB-UniRule"/>
</dbReference>
<dbReference type="GO" id="GO:0042450">
    <property type="term" value="P:arginine biosynthetic process via ornithine"/>
    <property type="evidence" value="ECO:0007669"/>
    <property type="project" value="TreeGrafter"/>
</dbReference>
<dbReference type="GO" id="GO:0019240">
    <property type="term" value="P:citrulline biosynthetic process"/>
    <property type="evidence" value="ECO:0007669"/>
    <property type="project" value="TreeGrafter"/>
</dbReference>
<dbReference type="GO" id="GO:0006526">
    <property type="term" value="P:L-arginine biosynthetic process"/>
    <property type="evidence" value="ECO:0007669"/>
    <property type="project" value="UniProtKB-UniRule"/>
</dbReference>
<dbReference type="FunFam" id="3.40.50.1370:FF:000008">
    <property type="entry name" value="Ornithine carbamoyltransferase"/>
    <property type="match status" value="1"/>
</dbReference>
<dbReference type="FunFam" id="3.40.50.1370:FF:000016">
    <property type="entry name" value="Ornithine carbamoyltransferase"/>
    <property type="match status" value="1"/>
</dbReference>
<dbReference type="Gene3D" id="3.40.50.1370">
    <property type="entry name" value="Aspartate/ornithine carbamoyltransferase"/>
    <property type="match status" value="2"/>
</dbReference>
<dbReference type="HAMAP" id="MF_01109">
    <property type="entry name" value="OTCase"/>
    <property type="match status" value="1"/>
</dbReference>
<dbReference type="InterPro" id="IPR006132">
    <property type="entry name" value="Asp/Orn_carbamoyltranf_P-bd"/>
</dbReference>
<dbReference type="InterPro" id="IPR006130">
    <property type="entry name" value="Asp/Orn_carbamoylTrfase"/>
</dbReference>
<dbReference type="InterPro" id="IPR036901">
    <property type="entry name" value="Asp/Orn_carbamoylTrfase_sf"/>
</dbReference>
<dbReference type="InterPro" id="IPR006131">
    <property type="entry name" value="Asp_carbamoyltransf_Asp/Orn-bd"/>
</dbReference>
<dbReference type="InterPro" id="IPR002292">
    <property type="entry name" value="Orn/put_carbamltrans"/>
</dbReference>
<dbReference type="InterPro" id="IPR024904">
    <property type="entry name" value="OTCase_ArgI"/>
</dbReference>
<dbReference type="NCBIfam" id="TIGR00658">
    <property type="entry name" value="orni_carb_tr"/>
    <property type="match status" value="1"/>
</dbReference>
<dbReference type="NCBIfam" id="NF001986">
    <property type="entry name" value="PRK00779.1"/>
    <property type="match status" value="1"/>
</dbReference>
<dbReference type="PANTHER" id="PTHR45753">
    <property type="entry name" value="ORNITHINE CARBAMOYLTRANSFERASE, MITOCHONDRIAL"/>
    <property type="match status" value="1"/>
</dbReference>
<dbReference type="PANTHER" id="PTHR45753:SF3">
    <property type="entry name" value="ORNITHINE TRANSCARBAMYLASE, MITOCHONDRIAL"/>
    <property type="match status" value="1"/>
</dbReference>
<dbReference type="Pfam" id="PF00185">
    <property type="entry name" value="OTCace"/>
    <property type="match status" value="1"/>
</dbReference>
<dbReference type="Pfam" id="PF02729">
    <property type="entry name" value="OTCace_N"/>
    <property type="match status" value="1"/>
</dbReference>
<dbReference type="PRINTS" id="PR00100">
    <property type="entry name" value="AOTCASE"/>
</dbReference>
<dbReference type="PRINTS" id="PR00102">
    <property type="entry name" value="OTCASE"/>
</dbReference>
<dbReference type="SUPFAM" id="SSF53671">
    <property type="entry name" value="Aspartate/ornithine carbamoyltransferase"/>
    <property type="match status" value="1"/>
</dbReference>
<dbReference type="PROSITE" id="PS00097">
    <property type="entry name" value="CARBAMOYLTRANSFERASE"/>
    <property type="match status" value="1"/>
</dbReference>
<proteinExistence type="inferred from homology"/>
<organism>
    <name type="scientific">Bacillus thuringiensis subsp. konkukian (strain 97-27)</name>
    <dbReference type="NCBI Taxonomy" id="281309"/>
    <lineage>
        <taxon>Bacteria</taxon>
        <taxon>Bacillati</taxon>
        <taxon>Bacillota</taxon>
        <taxon>Bacilli</taxon>
        <taxon>Bacillales</taxon>
        <taxon>Bacillaceae</taxon>
        <taxon>Bacillus</taxon>
        <taxon>Bacillus cereus group</taxon>
    </lineage>
</organism>
<name>OTC_BACHK</name>
<sequence>MSTVQVPKLNTKDLLTLEELTKEEIISLIEFAIHLKKNKQEPLLQGKILGLIFDKHSTRTRVSFEAGMVQLGGHGMFLSGKEMQMGRGETVSDTAKVLSQYIDGIMIRTFSHADVEELAKESSIPVINGLTDDHHPCQALADLMTIYEETNTFKGIKLAYVGDGNNVCHSLLLASAKVGMHMTVATPVGYEPNEEIVKKALAIAKETGAEIEVLHDPELAVNEADFIYTDVWMSMGQEGEEEKYTLFQPYQINKELVTHAKQTYRFLHCLPAHREEEVTGEIIDGPQSIVFEQAGNRLHAQKALLVSLFKSVEELS</sequence>
<protein>
    <recommendedName>
        <fullName evidence="2">Ornithine carbamoyltransferase</fullName>
        <shortName evidence="2">OTCase</shortName>
        <ecNumber evidence="2">2.1.3.3</ecNumber>
    </recommendedName>
</protein>
<comment type="function">
    <text evidence="1">Reversibly catalyzes the transfer of the carbamoyl group from carbamoyl phosphate (CP) to the N(epsilon) atom of ornithine (ORN) to produce L-citrulline.</text>
</comment>
<comment type="catalytic activity">
    <reaction evidence="2">
        <text>carbamoyl phosphate + L-ornithine = L-citrulline + phosphate + H(+)</text>
        <dbReference type="Rhea" id="RHEA:19513"/>
        <dbReference type="ChEBI" id="CHEBI:15378"/>
        <dbReference type="ChEBI" id="CHEBI:43474"/>
        <dbReference type="ChEBI" id="CHEBI:46911"/>
        <dbReference type="ChEBI" id="CHEBI:57743"/>
        <dbReference type="ChEBI" id="CHEBI:58228"/>
        <dbReference type="EC" id="2.1.3.3"/>
    </reaction>
</comment>
<comment type="pathway">
    <text evidence="2">Amino-acid biosynthesis; L-arginine biosynthesis; L-arginine from L-ornithine and carbamoyl phosphate: step 1/3.</text>
</comment>
<comment type="subcellular location">
    <subcellularLocation>
        <location evidence="2">Cytoplasm</location>
    </subcellularLocation>
</comment>
<comment type="similarity">
    <text evidence="2">Belongs to the aspartate/ornithine carbamoyltransferase superfamily. OTCase family.</text>
</comment>
<accession>Q6HE32</accession>